<feature type="chain" id="PRO_1000115130" description="Large ribosomal subunit protein bL33">
    <location>
        <begin position="1"/>
        <end position="55"/>
    </location>
</feature>
<evidence type="ECO:0000255" key="1">
    <source>
        <dbReference type="HAMAP-Rule" id="MF_00294"/>
    </source>
</evidence>
<evidence type="ECO:0000305" key="2"/>
<dbReference type="EMBL" id="CP000948">
    <property type="protein sequence ID" value="ACB04686.1"/>
    <property type="molecule type" value="Genomic_DNA"/>
</dbReference>
<dbReference type="RefSeq" id="WP_001051798.1">
    <property type="nucleotide sequence ID" value="NC_010473.1"/>
</dbReference>
<dbReference type="SMR" id="B1X970"/>
<dbReference type="GeneID" id="97607673"/>
<dbReference type="KEGG" id="ecd:ECDH10B_3818"/>
<dbReference type="HOGENOM" id="CLU_190949_1_1_6"/>
<dbReference type="GO" id="GO:0022625">
    <property type="term" value="C:cytosolic large ribosomal subunit"/>
    <property type="evidence" value="ECO:0007669"/>
    <property type="project" value="TreeGrafter"/>
</dbReference>
<dbReference type="GO" id="GO:0003735">
    <property type="term" value="F:structural constituent of ribosome"/>
    <property type="evidence" value="ECO:0007669"/>
    <property type="project" value="InterPro"/>
</dbReference>
<dbReference type="GO" id="GO:0006412">
    <property type="term" value="P:translation"/>
    <property type="evidence" value="ECO:0007669"/>
    <property type="project" value="UniProtKB-UniRule"/>
</dbReference>
<dbReference type="FunFam" id="2.20.28.120:FF:000001">
    <property type="entry name" value="50S ribosomal protein L33"/>
    <property type="match status" value="1"/>
</dbReference>
<dbReference type="Gene3D" id="2.20.28.120">
    <property type="entry name" value="Ribosomal protein L33"/>
    <property type="match status" value="1"/>
</dbReference>
<dbReference type="HAMAP" id="MF_00294">
    <property type="entry name" value="Ribosomal_bL33"/>
    <property type="match status" value="1"/>
</dbReference>
<dbReference type="InterPro" id="IPR001705">
    <property type="entry name" value="Ribosomal_bL33"/>
</dbReference>
<dbReference type="InterPro" id="IPR018264">
    <property type="entry name" value="Ribosomal_bL33_CS"/>
</dbReference>
<dbReference type="InterPro" id="IPR038584">
    <property type="entry name" value="Ribosomal_bL33_sf"/>
</dbReference>
<dbReference type="InterPro" id="IPR011332">
    <property type="entry name" value="Ribosomal_zn-bd"/>
</dbReference>
<dbReference type="NCBIfam" id="NF001860">
    <property type="entry name" value="PRK00595.1"/>
    <property type="match status" value="1"/>
</dbReference>
<dbReference type="NCBIfam" id="TIGR01023">
    <property type="entry name" value="rpmG_bact"/>
    <property type="match status" value="1"/>
</dbReference>
<dbReference type="PANTHER" id="PTHR15238">
    <property type="entry name" value="54S RIBOSOMAL PROTEIN L39, MITOCHONDRIAL"/>
    <property type="match status" value="1"/>
</dbReference>
<dbReference type="PANTHER" id="PTHR15238:SF1">
    <property type="entry name" value="LARGE RIBOSOMAL SUBUNIT PROTEIN BL33M"/>
    <property type="match status" value="1"/>
</dbReference>
<dbReference type="Pfam" id="PF00471">
    <property type="entry name" value="Ribosomal_L33"/>
    <property type="match status" value="1"/>
</dbReference>
<dbReference type="SUPFAM" id="SSF57829">
    <property type="entry name" value="Zn-binding ribosomal proteins"/>
    <property type="match status" value="1"/>
</dbReference>
<dbReference type="PROSITE" id="PS00582">
    <property type="entry name" value="RIBOSOMAL_L33"/>
    <property type="match status" value="1"/>
</dbReference>
<accession>B1X970</accession>
<gene>
    <name evidence="1" type="primary">rpmG</name>
    <name type="ordered locus">ECDH10B_3818</name>
</gene>
<keyword id="KW-0687">Ribonucleoprotein</keyword>
<keyword id="KW-0689">Ribosomal protein</keyword>
<comment type="similarity">
    <text evidence="1">Belongs to the bacterial ribosomal protein bL33 family.</text>
</comment>
<name>RL33_ECODH</name>
<proteinExistence type="inferred from homology"/>
<protein>
    <recommendedName>
        <fullName evidence="1">Large ribosomal subunit protein bL33</fullName>
    </recommendedName>
    <alternativeName>
        <fullName evidence="2">50S ribosomal protein L33</fullName>
    </alternativeName>
</protein>
<reference key="1">
    <citation type="journal article" date="2008" name="J. Bacteriol.">
        <title>The complete genome sequence of Escherichia coli DH10B: insights into the biology of a laboratory workhorse.</title>
        <authorList>
            <person name="Durfee T."/>
            <person name="Nelson R."/>
            <person name="Baldwin S."/>
            <person name="Plunkett G. III"/>
            <person name="Burland V."/>
            <person name="Mau B."/>
            <person name="Petrosino J.F."/>
            <person name="Qin X."/>
            <person name="Muzny D.M."/>
            <person name="Ayele M."/>
            <person name="Gibbs R.A."/>
            <person name="Csorgo B."/>
            <person name="Posfai G."/>
            <person name="Weinstock G.M."/>
            <person name="Blattner F.R."/>
        </authorList>
    </citation>
    <scope>NUCLEOTIDE SEQUENCE [LARGE SCALE GENOMIC DNA]</scope>
    <source>
        <strain>K12 / DH10B</strain>
    </source>
</reference>
<sequence>MAKGIREKIKLVSSAGTGHFYTTTKNKRTKPEKLELKKFDPVVRQHVIYKEAKIK</sequence>
<organism>
    <name type="scientific">Escherichia coli (strain K12 / DH10B)</name>
    <dbReference type="NCBI Taxonomy" id="316385"/>
    <lineage>
        <taxon>Bacteria</taxon>
        <taxon>Pseudomonadati</taxon>
        <taxon>Pseudomonadota</taxon>
        <taxon>Gammaproteobacteria</taxon>
        <taxon>Enterobacterales</taxon>
        <taxon>Enterobacteriaceae</taxon>
        <taxon>Escherichia</taxon>
    </lineage>
</organism>